<keyword id="KW-0378">Hydrolase</keyword>
<keyword id="KW-0546">Nucleotide metabolism</keyword>
<keyword id="KW-0547">Nucleotide-binding</keyword>
<feature type="chain" id="PRO_1000096466" description="dCTP deaminase">
    <location>
        <begin position="1"/>
        <end position="193"/>
    </location>
</feature>
<feature type="region of interest" description="Disordered" evidence="2">
    <location>
        <begin position="169"/>
        <end position="193"/>
    </location>
</feature>
<feature type="active site" description="Proton donor/acceptor" evidence="1">
    <location>
        <position position="138"/>
    </location>
</feature>
<feature type="binding site" evidence="1">
    <location>
        <begin position="110"/>
        <end position="115"/>
    </location>
    <ligand>
        <name>dCTP</name>
        <dbReference type="ChEBI" id="CHEBI:61481"/>
    </ligand>
</feature>
<feature type="binding site" evidence="1">
    <location>
        <position position="128"/>
    </location>
    <ligand>
        <name>dCTP</name>
        <dbReference type="ChEBI" id="CHEBI:61481"/>
    </ligand>
</feature>
<feature type="binding site" evidence="1">
    <location>
        <begin position="136"/>
        <end position="138"/>
    </location>
    <ligand>
        <name>dCTP</name>
        <dbReference type="ChEBI" id="CHEBI:61481"/>
    </ligand>
</feature>
<feature type="binding site" evidence="1">
    <location>
        <position position="171"/>
    </location>
    <ligand>
        <name>dCTP</name>
        <dbReference type="ChEBI" id="CHEBI:61481"/>
    </ligand>
</feature>
<feature type="binding site" evidence="1">
    <location>
        <position position="178"/>
    </location>
    <ligand>
        <name>dCTP</name>
        <dbReference type="ChEBI" id="CHEBI:61481"/>
    </ligand>
</feature>
<feature type="binding site" evidence="1">
    <location>
        <position position="182"/>
    </location>
    <ligand>
        <name>dCTP</name>
        <dbReference type="ChEBI" id="CHEBI:61481"/>
    </ligand>
</feature>
<proteinExistence type="inferred from homology"/>
<sequence length="193" mass="21140">MRLCDRDIEAWLDSGKLGIEPRPPVERINGATVDVRLGNQFRVFRGHTAAFIDLSGPKDEVSAALERVMSDEINLPEGEAFFLHPGELALAVTLESVTIPDDLVGWLDGRSSLARLGLMVHVTAHRIDPGWQGRIVLEFYNSGKLPLALRPGMLIGALSFEPLSGPAARPYNSRQDAKYRGQQGAVASRIDKD</sequence>
<protein>
    <recommendedName>
        <fullName evidence="1">dCTP deaminase</fullName>
        <ecNumber evidence="1">3.5.4.13</ecNumber>
    </recommendedName>
    <alternativeName>
        <fullName evidence="1">Deoxycytidine triphosphate deaminase</fullName>
    </alternativeName>
</protein>
<reference key="1">
    <citation type="submission" date="2008-02" db="EMBL/GenBank/DDBJ databases">
        <title>Complete sequence of Yersinia pseudotuberculosis YPIII.</title>
        <authorList>
            <consortium name="US DOE Joint Genome Institute"/>
            <person name="Copeland A."/>
            <person name="Lucas S."/>
            <person name="Lapidus A."/>
            <person name="Glavina del Rio T."/>
            <person name="Dalin E."/>
            <person name="Tice H."/>
            <person name="Bruce D."/>
            <person name="Goodwin L."/>
            <person name="Pitluck S."/>
            <person name="Munk A.C."/>
            <person name="Brettin T."/>
            <person name="Detter J.C."/>
            <person name="Han C."/>
            <person name="Tapia R."/>
            <person name="Schmutz J."/>
            <person name="Larimer F."/>
            <person name="Land M."/>
            <person name="Hauser L."/>
            <person name="Challacombe J.F."/>
            <person name="Green L."/>
            <person name="Lindler L.E."/>
            <person name="Nikolich M.P."/>
            <person name="Richardson P."/>
        </authorList>
    </citation>
    <scope>NUCLEOTIDE SEQUENCE [LARGE SCALE GENOMIC DNA]</scope>
    <source>
        <strain>YPIII</strain>
    </source>
</reference>
<organism>
    <name type="scientific">Yersinia pseudotuberculosis serotype O:3 (strain YPIII)</name>
    <dbReference type="NCBI Taxonomy" id="502800"/>
    <lineage>
        <taxon>Bacteria</taxon>
        <taxon>Pseudomonadati</taxon>
        <taxon>Pseudomonadota</taxon>
        <taxon>Gammaproteobacteria</taxon>
        <taxon>Enterobacterales</taxon>
        <taxon>Yersiniaceae</taxon>
        <taxon>Yersinia</taxon>
    </lineage>
</organism>
<gene>
    <name evidence="1" type="primary">dcd</name>
    <name type="ordered locus">YPK_2551</name>
</gene>
<accession>B1JPY5</accession>
<evidence type="ECO:0000255" key="1">
    <source>
        <dbReference type="HAMAP-Rule" id="MF_00146"/>
    </source>
</evidence>
<evidence type="ECO:0000256" key="2">
    <source>
        <dbReference type="SAM" id="MobiDB-lite"/>
    </source>
</evidence>
<comment type="function">
    <text evidence="1">Catalyzes the deamination of dCTP to dUTP.</text>
</comment>
<comment type="catalytic activity">
    <reaction evidence="1">
        <text>dCTP + H2O + H(+) = dUTP + NH4(+)</text>
        <dbReference type="Rhea" id="RHEA:22680"/>
        <dbReference type="ChEBI" id="CHEBI:15377"/>
        <dbReference type="ChEBI" id="CHEBI:15378"/>
        <dbReference type="ChEBI" id="CHEBI:28938"/>
        <dbReference type="ChEBI" id="CHEBI:61481"/>
        <dbReference type="ChEBI" id="CHEBI:61555"/>
        <dbReference type="EC" id="3.5.4.13"/>
    </reaction>
</comment>
<comment type="pathway">
    <text evidence="1">Pyrimidine metabolism; dUMP biosynthesis; dUMP from dCTP (dUTP route): step 1/2.</text>
</comment>
<comment type="subunit">
    <text evidence="1">Homotrimer.</text>
</comment>
<comment type="similarity">
    <text evidence="1">Belongs to the dCTP deaminase family.</text>
</comment>
<name>DCD_YERPY</name>
<dbReference type="EC" id="3.5.4.13" evidence="1"/>
<dbReference type="EMBL" id="CP000950">
    <property type="protein sequence ID" value="ACA68828.1"/>
    <property type="molecule type" value="Genomic_DNA"/>
</dbReference>
<dbReference type="RefSeq" id="WP_002211873.1">
    <property type="nucleotide sequence ID" value="NZ_CP009792.1"/>
</dbReference>
<dbReference type="SMR" id="B1JPY5"/>
<dbReference type="GeneID" id="96665144"/>
<dbReference type="KEGG" id="ypy:YPK_2551"/>
<dbReference type="PATRIC" id="fig|502800.11.peg.3247"/>
<dbReference type="UniPathway" id="UPA00610">
    <property type="reaction ID" value="UER00665"/>
</dbReference>
<dbReference type="GO" id="GO:0008829">
    <property type="term" value="F:dCTP deaminase activity"/>
    <property type="evidence" value="ECO:0007669"/>
    <property type="project" value="UniProtKB-UniRule"/>
</dbReference>
<dbReference type="GO" id="GO:0000166">
    <property type="term" value="F:nucleotide binding"/>
    <property type="evidence" value="ECO:0007669"/>
    <property type="project" value="UniProtKB-KW"/>
</dbReference>
<dbReference type="GO" id="GO:0006226">
    <property type="term" value="P:dUMP biosynthetic process"/>
    <property type="evidence" value="ECO:0007669"/>
    <property type="project" value="UniProtKB-UniPathway"/>
</dbReference>
<dbReference type="GO" id="GO:0006229">
    <property type="term" value="P:dUTP biosynthetic process"/>
    <property type="evidence" value="ECO:0007669"/>
    <property type="project" value="UniProtKB-UniRule"/>
</dbReference>
<dbReference type="GO" id="GO:0015949">
    <property type="term" value="P:nucleobase-containing small molecule interconversion"/>
    <property type="evidence" value="ECO:0007669"/>
    <property type="project" value="TreeGrafter"/>
</dbReference>
<dbReference type="CDD" id="cd07557">
    <property type="entry name" value="trimeric_dUTPase"/>
    <property type="match status" value="1"/>
</dbReference>
<dbReference type="FunFam" id="2.70.40.10:FF:000003">
    <property type="entry name" value="dCTP deaminase"/>
    <property type="match status" value="1"/>
</dbReference>
<dbReference type="Gene3D" id="2.70.40.10">
    <property type="match status" value="1"/>
</dbReference>
<dbReference type="HAMAP" id="MF_00146">
    <property type="entry name" value="dCTP_deaminase"/>
    <property type="match status" value="1"/>
</dbReference>
<dbReference type="InterPro" id="IPR011962">
    <property type="entry name" value="dCTP_deaminase"/>
</dbReference>
<dbReference type="InterPro" id="IPR036157">
    <property type="entry name" value="dUTPase-like_sf"/>
</dbReference>
<dbReference type="InterPro" id="IPR033704">
    <property type="entry name" value="dUTPase_trimeric"/>
</dbReference>
<dbReference type="NCBIfam" id="TIGR02274">
    <property type="entry name" value="dCTP_deam"/>
    <property type="match status" value="1"/>
</dbReference>
<dbReference type="PANTHER" id="PTHR42680">
    <property type="entry name" value="DCTP DEAMINASE"/>
    <property type="match status" value="1"/>
</dbReference>
<dbReference type="PANTHER" id="PTHR42680:SF3">
    <property type="entry name" value="DCTP DEAMINASE"/>
    <property type="match status" value="1"/>
</dbReference>
<dbReference type="Pfam" id="PF22769">
    <property type="entry name" value="DCD"/>
    <property type="match status" value="1"/>
</dbReference>
<dbReference type="SUPFAM" id="SSF51283">
    <property type="entry name" value="dUTPase-like"/>
    <property type="match status" value="1"/>
</dbReference>